<sequence length="304" mass="34755">MGGFVKTQKTNAYYKRFQVKFKRRRQGKTDYRARIRLTNQDKNKYNTPKYRFVVRFTNKDITAQIVYATIAGDIVMAAAYSHELPRYGLEVGLTNYAAAYCTGLLLARRVLKLRGLDQEYEGNIEATGEDYYVEPADERRPFRALLDVGLIRTTTGNRVFGALKGALDGGLDIPHSDKRFAGFKKDEKQLDSDIHRKYIYGGHVADYMRSMAEEEPEKFQAHFSEYLKKGIDADGMEALYKKVHAAIRADPTMAKSTKKEPATHKRYNLKKLTYEQRKASLVERLNALNSSAGADDDDEEEDDE</sequence>
<accession>A2WXX3</accession>
<accession>P49625</accession>
<accession>Q5N8N2</accession>
<accession>Q8L3Y8</accession>
<keyword id="KW-0963">Cytoplasm</keyword>
<keyword id="KW-0539">Nucleus</keyword>
<keyword id="KW-1185">Reference proteome</keyword>
<keyword id="KW-0687">Ribonucleoprotein</keyword>
<keyword id="KW-0689">Ribosomal protein</keyword>
<keyword id="KW-0694">RNA-binding</keyword>
<keyword id="KW-0699">rRNA-binding</keyword>
<reference key="1">
    <citation type="journal article" date="1993" name="Plant Mol. Biol.">
        <title>A rice (Oryza sativa L.) cDNA encodes a protein sequence homologous to the eukaryotic ribosomal 5S RNA-binding protein.</title>
        <authorList>
            <person name="Kim J.K."/>
            <person name="Wu R."/>
        </authorList>
    </citation>
    <scope>NUCLEOTIDE SEQUENCE [GENOMIC DNA]</scope>
    <source>
        <strain>cv. IR36</strain>
    </source>
</reference>
<reference key="2">
    <citation type="journal article" date="2005" name="PLoS Biol.">
        <title>The genomes of Oryza sativa: a history of duplications.</title>
        <authorList>
            <person name="Yu J."/>
            <person name="Wang J."/>
            <person name="Lin W."/>
            <person name="Li S."/>
            <person name="Li H."/>
            <person name="Zhou J."/>
            <person name="Ni P."/>
            <person name="Dong W."/>
            <person name="Hu S."/>
            <person name="Zeng C."/>
            <person name="Zhang J."/>
            <person name="Zhang Y."/>
            <person name="Li R."/>
            <person name="Xu Z."/>
            <person name="Li S."/>
            <person name="Li X."/>
            <person name="Zheng H."/>
            <person name="Cong L."/>
            <person name="Lin L."/>
            <person name="Yin J."/>
            <person name="Geng J."/>
            <person name="Li G."/>
            <person name="Shi J."/>
            <person name="Liu J."/>
            <person name="Lv H."/>
            <person name="Li J."/>
            <person name="Wang J."/>
            <person name="Deng Y."/>
            <person name="Ran L."/>
            <person name="Shi X."/>
            <person name="Wang X."/>
            <person name="Wu Q."/>
            <person name="Li C."/>
            <person name="Ren X."/>
            <person name="Wang J."/>
            <person name="Wang X."/>
            <person name="Li D."/>
            <person name="Liu D."/>
            <person name="Zhang X."/>
            <person name="Ji Z."/>
            <person name="Zhao W."/>
            <person name="Sun Y."/>
            <person name="Zhang Z."/>
            <person name="Bao J."/>
            <person name="Han Y."/>
            <person name="Dong L."/>
            <person name="Ji J."/>
            <person name="Chen P."/>
            <person name="Wu S."/>
            <person name="Liu J."/>
            <person name="Xiao Y."/>
            <person name="Bu D."/>
            <person name="Tan J."/>
            <person name="Yang L."/>
            <person name="Ye C."/>
            <person name="Zhang J."/>
            <person name="Xu J."/>
            <person name="Zhou Y."/>
            <person name="Yu Y."/>
            <person name="Zhang B."/>
            <person name="Zhuang S."/>
            <person name="Wei H."/>
            <person name="Liu B."/>
            <person name="Lei M."/>
            <person name="Yu H."/>
            <person name="Li Y."/>
            <person name="Xu H."/>
            <person name="Wei S."/>
            <person name="He X."/>
            <person name="Fang L."/>
            <person name="Zhang Z."/>
            <person name="Zhang Y."/>
            <person name="Huang X."/>
            <person name="Su Z."/>
            <person name="Tong W."/>
            <person name="Li J."/>
            <person name="Tong Z."/>
            <person name="Li S."/>
            <person name="Ye J."/>
            <person name="Wang L."/>
            <person name="Fang L."/>
            <person name="Lei T."/>
            <person name="Chen C.-S."/>
            <person name="Chen H.-C."/>
            <person name="Xu Z."/>
            <person name="Li H."/>
            <person name="Huang H."/>
            <person name="Zhang F."/>
            <person name="Xu H."/>
            <person name="Li N."/>
            <person name="Zhao C."/>
            <person name="Li S."/>
            <person name="Dong L."/>
            <person name="Huang Y."/>
            <person name="Li L."/>
            <person name="Xi Y."/>
            <person name="Qi Q."/>
            <person name="Li W."/>
            <person name="Zhang B."/>
            <person name="Hu W."/>
            <person name="Zhang Y."/>
            <person name="Tian X."/>
            <person name="Jiao Y."/>
            <person name="Liang X."/>
            <person name="Jin J."/>
            <person name="Gao L."/>
            <person name="Zheng W."/>
            <person name="Hao B."/>
            <person name="Liu S.-M."/>
            <person name="Wang W."/>
            <person name="Yuan L."/>
            <person name="Cao M."/>
            <person name="McDermott J."/>
            <person name="Samudrala R."/>
            <person name="Wang J."/>
            <person name="Wong G.K.-S."/>
            <person name="Yang H."/>
        </authorList>
    </citation>
    <scope>NUCLEOTIDE SEQUENCE [LARGE SCALE GENOMIC DNA]</scope>
    <source>
        <strain>cv. 93-11</strain>
    </source>
</reference>
<protein>
    <recommendedName>
        <fullName evidence="3">Large ribosomal subunit protein uL18</fullName>
    </recommendedName>
    <alternativeName>
        <fullName>60S ribosomal protein L5-1</fullName>
    </alternativeName>
</protein>
<evidence type="ECO:0000250" key="1">
    <source>
        <dbReference type="UniProtKB" id="P26321"/>
    </source>
</evidence>
<evidence type="ECO:0000256" key="2">
    <source>
        <dbReference type="SAM" id="MobiDB-lite"/>
    </source>
</evidence>
<evidence type="ECO:0000305" key="3"/>
<name>RL51_ORYSI</name>
<comment type="function">
    <text evidence="1">Component of the ribosome, a large ribonucleoprotein complex responsible for the synthesis of proteins in the cell. The small ribosomal subunit (SSU) binds messenger RNAs (mRNAs) and translates the encoded message by selecting cognate aminoacyl-transfer RNA (tRNA) molecules. The large subunit (LSU) contains the ribosomal catalytic site termed the peptidyl transferase center (PTC), which catalyzes the formation of peptide bonds, thereby polymerizing the amino acids delivered by tRNAs into a polypeptide chain. The nascent polypeptides leave the ribosome through a tunnel in the LSU and interact with protein factors that function in enzymatic processing, targeting, and the membrane insertion of nascent chains at the exit of the ribosomal tunnel.</text>
</comment>
<comment type="subunit">
    <text evidence="1">Component of the large ribosomal subunit (LSU).</text>
</comment>
<comment type="subcellular location">
    <subcellularLocation>
        <location evidence="1">Cytoplasm</location>
    </subcellularLocation>
    <subcellularLocation>
        <location evidence="1">Nucleus</location>
    </subcellularLocation>
</comment>
<comment type="similarity">
    <text evidence="3">Belongs to the universal ribosomal protein uL18 family.</text>
</comment>
<comment type="sequence caution" evidence="3">
    <conflict type="frameshift">
        <sequence resource="EMBL" id="X64622"/>
    </conflict>
</comment>
<proteinExistence type="inferred from homology"/>
<gene>
    <name type="primary">RPL5A</name>
    <name type="synonym">RPL5</name>
    <name type="ORF">OsI_004666</name>
</gene>
<organism>
    <name type="scientific">Oryza sativa subsp. indica</name>
    <name type="common">Rice</name>
    <dbReference type="NCBI Taxonomy" id="39946"/>
    <lineage>
        <taxon>Eukaryota</taxon>
        <taxon>Viridiplantae</taxon>
        <taxon>Streptophyta</taxon>
        <taxon>Embryophyta</taxon>
        <taxon>Tracheophyta</taxon>
        <taxon>Spermatophyta</taxon>
        <taxon>Magnoliopsida</taxon>
        <taxon>Liliopsida</taxon>
        <taxon>Poales</taxon>
        <taxon>Poaceae</taxon>
        <taxon>BOP clade</taxon>
        <taxon>Oryzoideae</taxon>
        <taxon>Oryzeae</taxon>
        <taxon>Oryzinae</taxon>
        <taxon>Oryza</taxon>
        <taxon>Oryza sativa</taxon>
    </lineage>
</organism>
<feature type="chain" id="PRO_0000302055" description="Large ribosomal subunit protein uL18">
    <location>
        <begin position="1"/>
        <end position="304"/>
    </location>
</feature>
<feature type="region of interest" description="Disordered" evidence="2">
    <location>
        <begin position="285"/>
        <end position="304"/>
    </location>
</feature>
<feature type="compositionally biased region" description="Acidic residues" evidence="2">
    <location>
        <begin position="294"/>
        <end position="304"/>
    </location>
</feature>
<dbReference type="EMBL" id="X64622">
    <property type="status" value="NOT_ANNOTATED_CDS"/>
    <property type="molecule type" value="Genomic_DNA"/>
</dbReference>
<dbReference type="EMBL" id="CM000126">
    <property type="status" value="NOT_ANNOTATED_CDS"/>
    <property type="molecule type" value="Genomic_DNA"/>
</dbReference>
<dbReference type="PIR" id="S39486">
    <property type="entry name" value="S39486"/>
</dbReference>
<dbReference type="SMR" id="A2WXX3"/>
<dbReference type="STRING" id="39946.A2WXX3"/>
<dbReference type="EnsemblPlants" id="BGIOSGA004978-TA">
    <property type="protein sequence ID" value="BGIOSGA004978-PA"/>
    <property type="gene ID" value="BGIOSGA004978"/>
</dbReference>
<dbReference type="Gramene" id="BGIOSGA004978-TA">
    <property type="protein sequence ID" value="BGIOSGA004978-PA"/>
    <property type="gene ID" value="BGIOSGA004978"/>
</dbReference>
<dbReference type="HOGENOM" id="CLU_056222_1_0_1"/>
<dbReference type="OMA" id="IYEAQVE"/>
<dbReference type="Proteomes" id="UP000007015">
    <property type="component" value="Chromosome 1"/>
</dbReference>
<dbReference type="ExpressionAtlas" id="A2WXX3">
    <property type="expression patterns" value="differential"/>
</dbReference>
<dbReference type="GO" id="GO:0022625">
    <property type="term" value="C:cytosolic large ribosomal subunit"/>
    <property type="evidence" value="ECO:0007669"/>
    <property type="project" value="TreeGrafter"/>
</dbReference>
<dbReference type="GO" id="GO:0005634">
    <property type="term" value="C:nucleus"/>
    <property type="evidence" value="ECO:0007669"/>
    <property type="project" value="UniProtKB-SubCell"/>
</dbReference>
<dbReference type="GO" id="GO:0008097">
    <property type="term" value="F:5S rRNA binding"/>
    <property type="evidence" value="ECO:0007669"/>
    <property type="project" value="InterPro"/>
</dbReference>
<dbReference type="GO" id="GO:0003735">
    <property type="term" value="F:structural constituent of ribosome"/>
    <property type="evidence" value="ECO:0007669"/>
    <property type="project" value="InterPro"/>
</dbReference>
<dbReference type="GO" id="GO:0000027">
    <property type="term" value="P:ribosomal large subunit assembly"/>
    <property type="evidence" value="ECO:0007669"/>
    <property type="project" value="TreeGrafter"/>
</dbReference>
<dbReference type="GO" id="GO:0006412">
    <property type="term" value="P:translation"/>
    <property type="evidence" value="ECO:0007669"/>
    <property type="project" value="InterPro"/>
</dbReference>
<dbReference type="CDD" id="cd00432">
    <property type="entry name" value="Ribosomal_L18_L5e"/>
    <property type="match status" value="1"/>
</dbReference>
<dbReference type="FunFam" id="3.30.420.100:FF:000002">
    <property type="entry name" value="60S ribosomal protein L5"/>
    <property type="match status" value="1"/>
</dbReference>
<dbReference type="Gene3D" id="3.30.420.100">
    <property type="match status" value="1"/>
</dbReference>
<dbReference type="HAMAP" id="MF_01337_A">
    <property type="entry name" value="Ribosomal_uL18_A"/>
    <property type="match status" value="1"/>
</dbReference>
<dbReference type="InterPro" id="IPR005485">
    <property type="entry name" value="Rbsml_uL18_euk"/>
</dbReference>
<dbReference type="InterPro" id="IPR025607">
    <property type="entry name" value="Ribosomal_uL18_C_euk"/>
</dbReference>
<dbReference type="PANTHER" id="PTHR23410:SF12">
    <property type="entry name" value="LARGE RIBOSOMAL SUBUNIT PROTEIN UL18"/>
    <property type="match status" value="1"/>
</dbReference>
<dbReference type="PANTHER" id="PTHR23410">
    <property type="entry name" value="RIBOSOMAL PROTEIN L5-RELATED"/>
    <property type="match status" value="1"/>
</dbReference>
<dbReference type="Pfam" id="PF14204">
    <property type="entry name" value="Ribosomal_L18_c"/>
    <property type="match status" value="1"/>
</dbReference>
<dbReference type="Pfam" id="PF17144">
    <property type="entry name" value="Ribosomal_L5e"/>
    <property type="match status" value="1"/>
</dbReference>
<dbReference type="PRINTS" id="PR00058">
    <property type="entry name" value="RIBOSOMALL5"/>
</dbReference>
<dbReference type="SUPFAM" id="SSF53137">
    <property type="entry name" value="Translational machinery components"/>
    <property type="match status" value="1"/>
</dbReference>